<evidence type="ECO:0000250" key="1">
    <source>
        <dbReference type="UniProtKB" id="Q5VWX1"/>
    </source>
</evidence>
<evidence type="ECO:0000250" key="2">
    <source>
        <dbReference type="UniProtKB" id="Q920F3"/>
    </source>
</evidence>
<evidence type="ECO:0000255" key="3">
    <source>
        <dbReference type="PROSITE-ProRule" id="PRU00117"/>
    </source>
</evidence>
<evidence type="ECO:0000256" key="4">
    <source>
        <dbReference type="SAM" id="MobiDB-lite"/>
    </source>
</evidence>
<evidence type="ECO:0000269" key="5">
    <source>
    </source>
</evidence>
<evidence type="ECO:0000269" key="6">
    <source>
    </source>
</evidence>
<evidence type="ECO:0000269" key="7">
    <source>
    </source>
</evidence>
<evidence type="ECO:0000269" key="8">
    <source>
    </source>
</evidence>
<evidence type="ECO:0000303" key="9">
    <source>
    </source>
</evidence>
<evidence type="ECO:0000305" key="10"/>
<evidence type="ECO:0007744" key="11">
    <source>
    </source>
</evidence>
<comment type="function">
    <text evidence="2 5 6 7 8">RNA-binding protein that plays a role in the regulation of alternative splicing and influences mRNA splice site selection and exon inclusion (By similarity). Binds both poly(A) and poly(U) homopolymers. Phosphorylation by PTK6 inhibits its RNA-binding ability. Induces an increased concentration-dependent incorporation of exon in CD44 pre-mRNA by direct binding to purine-rich exonic enhancer (By similarity). Can regulate alternative splicing of neurexins NRXN1-3 in the laminin G-like domain 6 containing the evolutionary conserved neurexin alternative spliced segment 4 (AS4) involved in neurexin selective targeting to postsynaptic partners. Regulates cell-type specific alternative splicing of NRXN1 at AS4 and acts synergystically with SAM68 in exon skipping. In contrast acts antagonistically with SAM68 in NRXN3 exon skipping at AS4 (PubMed:22196734, PubMed:24469635). Its phosphorylation by FYN inhibits its ability to regulate splice site selection (By similarity). May function as an adapter protein for Src kinases during mitosis (PubMed:10077576).</text>
</comment>
<comment type="subunit">
    <text evidence="1 2 5">Self-associates to form homooligomers (By similarity). Interacts with KHDRBS1/SAM68; heterooligomer formation of KHDRBS family proteins may modulate RNA substrate specificity (PubMed:10077576). Interacts with RBMX, SAFB, SFRS9 and YTHDC1 (By similarity). Interacts with FYN and PLCG1 (via SH3 domain). Interacts (phosphorylated) with FYN, GRB2, PLCG1 and RASA1 (via SH2 domain) (PubMed:10077576).</text>
</comment>
<comment type="interaction">
    <interactant intactId="EBI-8339046">
        <id>Q9WU01</id>
    </interactant>
    <interactant intactId="EBI-524514">
        <id>P39688</id>
        <label>Fyn</label>
    </interactant>
    <organismsDiffer>false</organismsDiffer>
    <experiments>2</experiments>
</comment>
<comment type="interaction">
    <interactant intactId="EBI-8339046">
        <id>Q9WU01</id>
    </interactant>
    <interactant intactId="EBI-520788">
        <id>P10686</id>
        <label>Plcg1</label>
    </interactant>
    <organismsDiffer>true</organismsDiffer>
    <experiments>2</experiments>
</comment>
<comment type="subcellular location">
    <subcellularLocation>
        <location evidence="5 6">Nucleus</location>
    </subcellularLocation>
</comment>
<comment type="alternative products">
    <event type="alternative splicing"/>
    <isoform>
        <id>Q9WU01-1</id>
        <name>1</name>
        <sequence type="displayed"/>
    </isoform>
    <isoform>
        <id>Q9WU01-2</id>
        <name>2</name>
        <sequence type="described" ref="VSP_029065 VSP_029066"/>
    </isoform>
</comment>
<comment type="tissue specificity">
    <text evidence="6 7">Expressed in heart, skin, brain, colon, spleen, kidney, cervix and testis. In adult cerebellum expressed predominantly in Purkinje cells and in the hippocampus is abundantly expressed in glutamatergic dentate granule cells and in specific inhibitory Schaffer collateral-associated and path-associated interneurons; expression is restricted to neuronal subpopulations largely non-overlapping with expression of KHDRBS3/SLM-2 (at protein level).</text>
</comment>
<comment type="developmental stage">
    <text evidence="7">In the developing cerebellum expression is increasing in the first 3 postnatal weeks.</text>
</comment>
<comment type="PTM">
    <text evidence="1">Methylated.</text>
</comment>
<comment type="PTM">
    <text evidence="5 6">Tyrosine phosphorylated by FYN, PTK6 and SRC. Tyrosine phosphorylated by SRC during mitosis.</text>
</comment>
<comment type="similarity">
    <text evidence="10">Belongs to the KHDRBS family.</text>
</comment>
<comment type="sequence caution" evidence="10">
    <conflict type="erroneous initiation">
        <sequence resource="EMBL-CDS" id="AAH66814"/>
    </conflict>
</comment>
<gene>
    <name type="primary">Khdrbs2</name>
    <name type="synonym">Slm1</name>
</gene>
<feature type="chain" id="PRO_0000308954" description="KH domain-containing, RNA-binding, signal transduction-associated protein 2">
    <location>
        <begin position="1"/>
        <end position="349"/>
    </location>
</feature>
<feature type="domain" description="KH" evidence="3">
    <location>
        <begin position="65"/>
        <end position="135"/>
    </location>
</feature>
<feature type="region of interest" description="Disordered" evidence="4">
    <location>
        <begin position="181"/>
        <end position="263"/>
    </location>
</feature>
<feature type="region of interest" description="Disordered" evidence="4">
    <location>
        <begin position="321"/>
        <end position="349"/>
    </location>
</feature>
<feature type="compositionally biased region" description="Low complexity" evidence="4">
    <location>
        <begin position="218"/>
        <end position="231"/>
    </location>
</feature>
<feature type="compositionally biased region" description="Basic and acidic residues" evidence="4">
    <location>
        <begin position="340"/>
        <end position="349"/>
    </location>
</feature>
<feature type="modified residue" description="Omega-N-methylarginine" evidence="11">
    <location>
        <position position="230"/>
    </location>
</feature>
<feature type="modified residue" description="Omega-N-methylarginine" evidence="11">
    <location>
        <position position="240"/>
    </location>
</feature>
<feature type="splice variant" id="VSP_029065" description="In isoform 2." evidence="9">
    <original>EEELRKSGEAKYAHLSDELHVLIEVFAPPGEAYSRMSHALEEIKKFLVPDYNDEIRQEQLRELSYLNGSEESGRGRGIRG</original>
    <variation>VLSFEVASSHVKQGSSIWSPVYNMWGWRSLFSMRLAFWYHTVAQSEVTIFFHHPPASFSGHSSCVAFCSSLCRSLSYCYTF</variation>
    <location>
        <begin position="113"/>
        <end position="192"/>
    </location>
</feature>
<feature type="splice variant" id="VSP_029066" description="In isoform 2." evidence="9">
    <location>
        <begin position="193"/>
        <end position="349"/>
    </location>
</feature>
<feature type="sequence conflict" description="In Ref. 2; AAH66814." evidence="10" ref="2">
    <original>D</original>
    <variation>N</variation>
    <location>
        <position position="44"/>
    </location>
</feature>
<reference key="1">
    <citation type="journal article" date="1999" name="Proc. Natl. Acad. Sci. U.S.A.">
        <title>Characterization of Sam68-like mammalian proteins SLM-1 and SLM-2: SLM-1 is a Src substrate during mitosis.</title>
        <authorList>
            <person name="Di Fruscio M."/>
            <person name="Chen T."/>
            <person name="Richard S."/>
        </authorList>
    </citation>
    <scope>NUCLEOTIDE SEQUENCE [MRNA] (ISOFORM 1)</scope>
    <scope>FUNCTION</scope>
    <scope>PHOSPHORYLATION</scope>
    <scope>INTERACTION WITH FYN; GRB2; PLCG1; RASA1; KHDRBS1</scope>
    <scope>SUBCELLULAR LOCATION</scope>
    <source>
        <tissue>Brain</tissue>
    </source>
</reference>
<reference key="2">
    <citation type="journal article" date="2004" name="Genome Res.">
        <title>The status, quality, and expansion of the NIH full-length cDNA project: the Mammalian Gene Collection (MGC).</title>
        <authorList>
            <consortium name="The MGC Project Team"/>
        </authorList>
    </citation>
    <scope>NUCLEOTIDE SEQUENCE [LARGE SCALE MRNA] (ISOFORMS 1 AND 2)</scope>
    <source>
        <strain>CD-1</strain>
        <tissue>Brain</tissue>
        <tissue>Neural stem cell</tissue>
    </source>
</reference>
<reference key="3">
    <citation type="journal article" date="2004" name="J. Biol. Chem.">
        <title>The nuclear tyrosine kinase BRK/Sik phosphorylates and inhibits the RNA-binding activities of the Sam68-like mammalian proteins SLM-1 and SLM-2.</title>
        <authorList>
            <person name="Haegebarth A."/>
            <person name="Heap D."/>
            <person name="Bie W."/>
            <person name="Derry J.J."/>
            <person name="Richard S."/>
            <person name="Tyner A.L."/>
        </authorList>
    </citation>
    <scope>PHOSPHORYLATION BY PTK6</scope>
    <scope>FUNCTION</scope>
    <scope>SUBCELLULAR LOCATION</scope>
    <scope>RNA-BINDING</scope>
    <scope>TISSUE SPECIFICITY</scope>
</reference>
<reference key="4">
    <citation type="journal article" date="2011" name="Cell">
        <title>SAM68 regulates neuronal activity-dependent alternative splicing of neurexin-1.</title>
        <authorList>
            <person name="Iijima T."/>
            <person name="Wu K."/>
            <person name="Witte H."/>
            <person name="Hanno-Iijima Y."/>
            <person name="Glatter T."/>
            <person name="Richard S."/>
            <person name="Scheiffele P."/>
        </authorList>
    </citation>
    <scope>FUNCTION</scope>
    <scope>TISSUE SPECIFICITY</scope>
    <scope>DEVELOPMENTAL STAGE</scope>
</reference>
<reference key="5">
    <citation type="journal article" date="2014" name="J. Cell Biol.">
        <title>Neuronal cell type-specific alternative splicing is regulated by the KH domain protein SLM1.</title>
        <authorList>
            <person name="Iijima T."/>
            <person name="Iijima Y."/>
            <person name="Witte H."/>
            <person name="Scheiffele P."/>
        </authorList>
    </citation>
    <scope>FUNCTION</scope>
    <scope>TISSUE SPECIFICITY</scope>
</reference>
<reference key="6">
    <citation type="journal article" date="2014" name="Mol. Cell. Proteomics">
        <title>Immunoaffinity enrichment and mass spectrometry analysis of protein methylation.</title>
        <authorList>
            <person name="Guo A."/>
            <person name="Gu H."/>
            <person name="Zhou J."/>
            <person name="Mulhern D."/>
            <person name="Wang Y."/>
            <person name="Lee K.A."/>
            <person name="Yang V."/>
            <person name="Aguiar M."/>
            <person name="Kornhauser J."/>
            <person name="Jia X."/>
            <person name="Ren J."/>
            <person name="Beausoleil S.A."/>
            <person name="Silva J.C."/>
            <person name="Vemulapalli V."/>
            <person name="Bedford M.T."/>
            <person name="Comb M.J."/>
        </authorList>
    </citation>
    <scope>METHYLATION [LARGE SCALE ANALYSIS] AT ARG-230 AND ARG-240</scope>
    <scope>IDENTIFICATION BY MASS SPECTROMETRY [LARGE SCALE ANALYSIS]</scope>
    <source>
        <tissue>Embryo</tissue>
    </source>
</reference>
<proteinExistence type="evidence at protein level"/>
<dbReference type="EMBL" id="AF098796">
    <property type="protein sequence ID" value="AAD20451.1"/>
    <property type="molecule type" value="mRNA"/>
</dbReference>
<dbReference type="EMBL" id="BC066814">
    <property type="protein sequence ID" value="AAH66814.1"/>
    <property type="status" value="ALT_INIT"/>
    <property type="molecule type" value="mRNA"/>
</dbReference>
<dbReference type="EMBL" id="BC132117">
    <property type="protein sequence ID" value="AAI32118.1"/>
    <property type="molecule type" value="mRNA"/>
</dbReference>
<dbReference type="EMBL" id="BC132119">
    <property type="protein sequence ID" value="AAI32120.1"/>
    <property type="molecule type" value="mRNA"/>
</dbReference>
<dbReference type="CCDS" id="CCDS14861.1">
    <molecule id="Q9WU01-1"/>
</dbReference>
<dbReference type="RefSeq" id="NP_573498.1">
    <molecule id="Q9WU01-1"/>
    <property type="nucleotide sequence ID" value="NM_133235.3"/>
</dbReference>
<dbReference type="SMR" id="Q9WU01"/>
<dbReference type="FunCoup" id="Q9WU01">
    <property type="interactions" value="1302"/>
</dbReference>
<dbReference type="IntAct" id="Q9WU01">
    <property type="interactions" value="6"/>
</dbReference>
<dbReference type="MINT" id="Q9WU01"/>
<dbReference type="STRING" id="10090.ENSMUSP00000027226"/>
<dbReference type="GlyGen" id="Q9WU01">
    <property type="glycosylation" value="4 sites, 1 O-linked glycan (1 site)"/>
</dbReference>
<dbReference type="iPTMnet" id="Q9WU01"/>
<dbReference type="PhosphoSitePlus" id="Q9WU01"/>
<dbReference type="PaxDb" id="10090-ENSMUSP00000027226"/>
<dbReference type="PeptideAtlas" id="Q9WU01"/>
<dbReference type="ProteomicsDB" id="264747">
    <molecule id="Q9WU01-1"/>
</dbReference>
<dbReference type="ProteomicsDB" id="264748">
    <molecule id="Q9WU01-2"/>
</dbReference>
<dbReference type="Antibodypedia" id="17553">
    <property type="antibodies" value="137 antibodies from 20 providers"/>
</dbReference>
<dbReference type="DNASU" id="170771"/>
<dbReference type="Ensembl" id="ENSMUST00000027226.12">
    <molecule id="Q9WU01-1"/>
    <property type="protein sequence ID" value="ENSMUSP00000027226.6"/>
    <property type="gene ID" value="ENSMUSG00000026058.12"/>
</dbReference>
<dbReference type="Ensembl" id="ENSMUST00000188257.7">
    <molecule id="Q9WU01-2"/>
    <property type="protein sequence ID" value="ENSMUSP00000140157.2"/>
    <property type="gene ID" value="ENSMUSG00000026058.12"/>
</dbReference>
<dbReference type="GeneID" id="170771"/>
<dbReference type="KEGG" id="mmu:170771"/>
<dbReference type="UCSC" id="uc007ano.1">
    <molecule id="Q9WU01-2"/>
    <property type="organism name" value="mouse"/>
</dbReference>
<dbReference type="UCSC" id="uc007anp.1">
    <molecule id="Q9WU01-1"/>
    <property type="organism name" value="mouse"/>
</dbReference>
<dbReference type="AGR" id="MGI:2159649"/>
<dbReference type="CTD" id="202559"/>
<dbReference type="MGI" id="MGI:2159649">
    <property type="gene designation" value="Khdrbs2"/>
</dbReference>
<dbReference type="VEuPathDB" id="HostDB:ENSMUSG00000026058"/>
<dbReference type="eggNOG" id="KOG1588">
    <property type="taxonomic scope" value="Eukaryota"/>
</dbReference>
<dbReference type="GeneTree" id="ENSGT00940000157134"/>
<dbReference type="HOGENOM" id="CLU_034976_0_0_1"/>
<dbReference type="InParanoid" id="Q9WU01"/>
<dbReference type="OMA" id="YGHGVNE"/>
<dbReference type="OrthoDB" id="6777263at2759"/>
<dbReference type="PhylomeDB" id="Q9WU01"/>
<dbReference type="TreeFam" id="TF314878"/>
<dbReference type="Reactome" id="R-MMU-8849468">
    <property type="pathway name" value="PTK6 Regulates Proteins Involved in RNA Processing"/>
</dbReference>
<dbReference type="BioGRID-ORCS" id="170771">
    <property type="hits" value="1 hit in 77 CRISPR screens"/>
</dbReference>
<dbReference type="ChiTaRS" id="Khdrbs2">
    <property type="organism name" value="mouse"/>
</dbReference>
<dbReference type="PRO" id="PR:Q9WU01"/>
<dbReference type="Proteomes" id="UP000000589">
    <property type="component" value="Chromosome 1"/>
</dbReference>
<dbReference type="RNAct" id="Q9WU01">
    <property type="molecule type" value="protein"/>
</dbReference>
<dbReference type="Bgee" id="ENSMUSG00000026058">
    <property type="expression patterns" value="Expressed in cortical plate and 122 other cell types or tissues"/>
</dbReference>
<dbReference type="ExpressionAtlas" id="Q9WU01">
    <property type="expression patterns" value="baseline and differential"/>
</dbReference>
<dbReference type="GO" id="GO:0005634">
    <property type="term" value="C:nucleus"/>
    <property type="evidence" value="ECO:0000304"/>
    <property type="project" value="MGI"/>
</dbReference>
<dbReference type="GO" id="GO:0008143">
    <property type="term" value="F:poly(A) binding"/>
    <property type="evidence" value="ECO:0000314"/>
    <property type="project" value="MGI"/>
</dbReference>
<dbReference type="GO" id="GO:0008266">
    <property type="term" value="F:poly(U) RNA binding"/>
    <property type="evidence" value="ECO:0000314"/>
    <property type="project" value="MGI"/>
</dbReference>
<dbReference type="GO" id="GO:0042169">
    <property type="term" value="F:SH2 domain binding"/>
    <property type="evidence" value="ECO:0000314"/>
    <property type="project" value="MGI"/>
</dbReference>
<dbReference type="GO" id="GO:0017124">
    <property type="term" value="F:SH3 domain binding"/>
    <property type="evidence" value="ECO:0000314"/>
    <property type="project" value="MGI"/>
</dbReference>
<dbReference type="GO" id="GO:0006397">
    <property type="term" value="P:mRNA processing"/>
    <property type="evidence" value="ECO:0007669"/>
    <property type="project" value="UniProtKB-KW"/>
</dbReference>
<dbReference type="GO" id="GO:0048024">
    <property type="term" value="P:regulation of mRNA splicing, via spliceosome"/>
    <property type="evidence" value="ECO:0000314"/>
    <property type="project" value="UniProtKB"/>
</dbReference>
<dbReference type="CDD" id="cd22469">
    <property type="entry name" value="KH-I_KHDRBS2"/>
    <property type="match status" value="1"/>
</dbReference>
<dbReference type="FunFam" id="3.30.1370.10:FF:000030">
    <property type="entry name" value="KH domain-containing, RNA-binding, signal transduction-associated protein 3 isoformX2"/>
    <property type="match status" value="1"/>
</dbReference>
<dbReference type="Gene3D" id="3.30.1370.10">
    <property type="entry name" value="K Homology domain, type 1"/>
    <property type="match status" value="1"/>
</dbReference>
<dbReference type="InterPro" id="IPR045071">
    <property type="entry name" value="BBP-like"/>
</dbReference>
<dbReference type="InterPro" id="IPR055256">
    <property type="entry name" value="KH_1_KHDC4/BBP-like"/>
</dbReference>
<dbReference type="InterPro" id="IPR004087">
    <property type="entry name" value="KH_dom"/>
</dbReference>
<dbReference type="InterPro" id="IPR036612">
    <property type="entry name" value="KH_dom_type_1_sf"/>
</dbReference>
<dbReference type="InterPro" id="IPR032571">
    <property type="entry name" value="Qua1_dom"/>
</dbReference>
<dbReference type="InterPro" id="IPR032335">
    <property type="entry name" value="Sam68-YY"/>
</dbReference>
<dbReference type="PANTHER" id="PTHR11208:SF34">
    <property type="entry name" value="KH DOMAIN-CONTAINING, RNA-BINDING, SIGNAL TRANSDUCTION-ASSOCIATED PROTEIN 2"/>
    <property type="match status" value="1"/>
</dbReference>
<dbReference type="PANTHER" id="PTHR11208">
    <property type="entry name" value="RNA-BINDING PROTEIN RELATED"/>
    <property type="match status" value="1"/>
</dbReference>
<dbReference type="Pfam" id="PF22675">
    <property type="entry name" value="KH-I_KHDC4-BBP"/>
    <property type="match status" value="1"/>
</dbReference>
<dbReference type="Pfam" id="PF16274">
    <property type="entry name" value="Qua1"/>
    <property type="match status" value="1"/>
</dbReference>
<dbReference type="Pfam" id="PF16568">
    <property type="entry name" value="Sam68-YY"/>
    <property type="match status" value="1"/>
</dbReference>
<dbReference type="SMART" id="SM00322">
    <property type="entry name" value="KH"/>
    <property type="match status" value="1"/>
</dbReference>
<dbReference type="SUPFAM" id="SSF54791">
    <property type="entry name" value="Eukaryotic type KH-domain (KH-domain type I)"/>
    <property type="match status" value="1"/>
</dbReference>
<dbReference type="PROSITE" id="PS50084">
    <property type="entry name" value="KH_TYPE_1"/>
    <property type="match status" value="1"/>
</dbReference>
<organism>
    <name type="scientific">Mus musculus</name>
    <name type="common">Mouse</name>
    <dbReference type="NCBI Taxonomy" id="10090"/>
    <lineage>
        <taxon>Eukaryota</taxon>
        <taxon>Metazoa</taxon>
        <taxon>Chordata</taxon>
        <taxon>Craniata</taxon>
        <taxon>Vertebrata</taxon>
        <taxon>Euteleostomi</taxon>
        <taxon>Mammalia</taxon>
        <taxon>Eutheria</taxon>
        <taxon>Euarchontoglires</taxon>
        <taxon>Glires</taxon>
        <taxon>Rodentia</taxon>
        <taxon>Myomorpha</taxon>
        <taxon>Muroidea</taxon>
        <taxon>Muridae</taxon>
        <taxon>Murinae</taxon>
        <taxon>Mus</taxon>
        <taxon>Mus</taxon>
    </lineage>
</organism>
<accession>Q9WU01</accession>
<accession>Q6NXZ3</accession>
<protein>
    <recommendedName>
        <fullName>KH domain-containing, RNA-binding, signal transduction-associated protein 2</fullName>
    </recommendedName>
    <alternativeName>
        <fullName>Sam68-like mammalian protein 1</fullName>
        <shortName>SLM-1</shortName>
        <shortName>mSLM-1</shortName>
    </alternativeName>
</protein>
<keyword id="KW-0025">Alternative splicing</keyword>
<keyword id="KW-0488">Methylation</keyword>
<keyword id="KW-0507">mRNA processing</keyword>
<keyword id="KW-0539">Nucleus</keyword>
<keyword id="KW-0597">Phosphoprotein</keyword>
<keyword id="KW-1185">Reference proteome</keyword>
<keyword id="KW-0694">RNA-binding</keyword>
<keyword id="KW-0729">SH3-binding</keyword>
<keyword id="KW-0804">Transcription</keyword>
<keyword id="KW-0805">Transcription regulation</keyword>
<sequence>MGEEKYLPELMAEKDSLDPSFVHASRLLAEEIEKFQGSDGKKEDEEKKYLDVISNKNIKLSERVLIPVKQYPKFNFVGKLLGPRGNSLKRLQEETGAKMSILGKGSMRDKTKEEELRKSGEAKYAHLSDELHVLIEVFAPPGEAYSRMSHALEEIKKFLVPDYNDEIRQEQLRELSYLNGSEESGRGRGIRGRGIRITPTAPSRGRGGAVPPPPPPGRGVLTPRGTTVTRGALPVPPIARGVPTPRARGTAAVPGYRAPPPPAHDAYEEYGYDDGYGGEYDDQTYEAYDNSYVTPTQSVPEYYDYGHGVNEDAYDSYAPEEWATTRSSLKAPPPRSARGGYREHPYGRY</sequence>
<name>KHDR2_MOUSE</name>